<gene>
    <name evidence="1" type="primary">ureC</name>
    <name type="ordered locus">PP_2845</name>
</gene>
<dbReference type="EC" id="3.5.1.5" evidence="1"/>
<dbReference type="EMBL" id="AE015451">
    <property type="protein sequence ID" value="AAN68453.1"/>
    <property type="molecule type" value="Genomic_DNA"/>
</dbReference>
<dbReference type="RefSeq" id="NP_744989.1">
    <property type="nucleotide sequence ID" value="NC_002947.4"/>
</dbReference>
<dbReference type="RefSeq" id="WP_010953753.1">
    <property type="nucleotide sequence ID" value="NZ_CP169744.1"/>
</dbReference>
<dbReference type="SMR" id="Q88J04"/>
<dbReference type="STRING" id="160488.PP_2845"/>
<dbReference type="MEROPS" id="M38.982"/>
<dbReference type="PaxDb" id="160488-PP_2845"/>
<dbReference type="GeneID" id="83680570"/>
<dbReference type="KEGG" id="ppu:PP_2845"/>
<dbReference type="PATRIC" id="fig|160488.4.peg.3018"/>
<dbReference type="eggNOG" id="COG0804">
    <property type="taxonomic scope" value="Bacteria"/>
</dbReference>
<dbReference type="HOGENOM" id="CLU_000980_0_0_6"/>
<dbReference type="OrthoDB" id="9802793at2"/>
<dbReference type="PhylomeDB" id="Q88J04"/>
<dbReference type="BioCyc" id="PPUT160488:G1G01-3025-MONOMER"/>
<dbReference type="UniPathway" id="UPA00258">
    <property type="reaction ID" value="UER00370"/>
</dbReference>
<dbReference type="Proteomes" id="UP000000556">
    <property type="component" value="Chromosome"/>
</dbReference>
<dbReference type="GO" id="GO:0005737">
    <property type="term" value="C:cytoplasm"/>
    <property type="evidence" value="ECO:0007669"/>
    <property type="project" value="UniProtKB-SubCell"/>
</dbReference>
<dbReference type="GO" id="GO:0016151">
    <property type="term" value="F:nickel cation binding"/>
    <property type="evidence" value="ECO:0007669"/>
    <property type="project" value="UniProtKB-UniRule"/>
</dbReference>
<dbReference type="GO" id="GO:0009039">
    <property type="term" value="F:urease activity"/>
    <property type="evidence" value="ECO:0007669"/>
    <property type="project" value="UniProtKB-UniRule"/>
</dbReference>
<dbReference type="GO" id="GO:0043419">
    <property type="term" value="P:urea catabolic process"/>
    <property type="evidence" value="ECO:0007669"/>
    <property type="project" value="UniProtKB-UniRule"/>
</dbReference>
<dbReference type="CDD" id="cd00375">
    <property type="entry name" value="Urease_alpha"/>
    <property type="match status" value="1"/>
</dbReference>
<dbReference type="Gene3D" id="3.20.20.140">
    <property type="entry name" value="Metal-dependent hydrolases"/>
    <property type="match status" value="1"/>
</dbReference>
<dbReference type="Gene3D" id="2.30.40.10">
    <property type="entry name" value="Urease, subunit C, domain 1"/>
    <property type="match status" value="1"/>
</dbReference>
<dbReference type="HAMAP" id="MF_01953">
    <property type="entry name" value="Urease_alpha"/>
    <property type="match status" value="1"/>
</dbReference>
<dbReference type="InterPro" id="IPR006680">
    <property type="entry name" value="Amidohydro-rel"/>
</dbReference>
<dbReference type="InterPro" id="IPR011059">
    <property type="entry name" value="Metal-dep_hydrolase_composite"/>
</dbReference>
<dbReference type="InterPro" id="IPR032466">
    <property type="entry name" value="Metal_Hydrolase"/>
</dbReference>
<dbReference type="InterPro" id="IPR011612">
    <property type="entry name" value="Urease_alpha_N_dom"/>
</dbReference>
<dbReference type="InterPro" id="IPR050112">
    <property type="entry name" value="Urease_alpha_subunit"/>
</dbReference>
<dbReference type="InterPro" id="IPR017950">
    <property type="entry name" value="Urease_AS"/>
</dbReference>
<dbReference type="InterPro" id="IPR005848">
    <property type="entry name" value="Urease_asu"/>
</dbReference>
<dbReference type="InterPro" id="IPR017951">
    <property type="entry name" value="Urease_asu_c"/>
</dbReference>
<dbReference type="InterPro" id="IPR029754">
    <property type="entry name" value="Urease_Ni-bd"/>
</dbReference>
<dbReference type="NCBIfam" id="NF009685">
    <property type="entry name" value="PRK13206.1"/>
    <property type="match status" value="1"/>
</dbReference>
<dbReference type="NCBIfam" id="NF009686">
    <property type="entry name" value="PRK13207.1"/>
    <property type="match status" value="1"/>
</dbReference>
<dbReference type="NCBIfam" id="TIGR01792">
    <property type="entry name" value="urease_alph"/>
    <property type="match status" value="1"/>
</dbReference>
<dbReference type="PANTHER" id="PTHR43440">
    <property type="entry name" value="UREASE"/>
    <property type="match status" value="1"/>
</dbReference>
<dbReference type="PANTHER" id="PTHR43440:SF1">
    <property type="entry name" value="UREASE"/>
    <property type="match status" value="1"/>
</dbReference>
<dbReference type="Pfam" id="PF01979">
    <property type="entry name" value="Amidohydro_1"/>
    <property type="match status" value="1"/>
</dbReference>
<dbReference type="Pfam" id="PF00449">
    <property type="entry name" value="Urease_alpha"/>
    <property type="match status" value="1"/>
</dbReference>
<dbReference type="PRINTS" id="PR01752">
    <property type="entry name" value="UREASE"/>
</dbReference>
<dbReference type="SUPFAM" id="SSF51338">
    <property type="entry name" value="Composite domain of metallo-dependent hydrolases"/>
    <property type="match status" value="2"/>
</dbReference>
<dbReference type="SUPFAM" id="SSF51556">
    <property type="entry name" value="Metallo-dependent hydrolases"/>
    <property type="match status" value="1"/>
</dbReference>
<dbReference type="PROSITE" id="PS01120">
    <property type="entry name" value="UREASE_1"/>
    <property type="match status" value="1"/>
</dbReference>
<dbReference type="PROSITE" id="PS00145">
    <property type="entry name" value="UREASE_2"/>
    <property type="match status" value="1"/>
</dbReference>
<dbReference type="PROSITE" id="PS51368">
    <property type="entry name" value="UREASE_3"/>
    <property type="match status" value="1"/>
</dbReference>
<proteinExistence type="inferred from homology"/>
<keyword id="KW-0963">Cytoplasm</keyword>
<keyword id="KW-0378">Hydrolase</keyword>
<keyword id="KW-0479">Metal-binding</keyword>
<keyword id="KW-0533">Nickel</keyword>
<keyword id="KW-1185">Reference proteome</keyword>
<accession>Q88J04</accession>
<organism>
    <name type="scientific">Pseudomonas putida (strain ATCC 47054 / DSM 6125 / CFBP 8728 / NCIMB 11950 / KT2440)</name>
    <dbReference type="NCBI Taxonomy" id="160488"/>
    <lineage>
        <taxon>Bacteria</taxon>
        <taxon>Pseudomonadati</taxon>
        <taxon>Pseudomonadota</taxon>
        <taxon>Gammaproteobacteria</taxon>
        <taxon>Pseudomonadales</taxon>
        <taxon>Pseudomonadaceae</taxon>
        <taxon>Pseudomonas</taxon>
    </lineage>
</organism>
<name>URE1_PSEPK</name>
<protein>
    <recommendedName>
        <fullName evidence="1">Urease subunit alpha</fullName>
        <ecNumber evidence="1">3.5.1.5</ecNumber>
    </recommendedName>
    <alternativeName>
        <fullName evidence="1">Urea amidohydrolase subunit alpha</fullName>
    </alternativeName>
</protein>
<sequence length="567" mass="60531">MSHISRQAYADMFGPTVGDRVRLADTALWVEVEKDFTIYGEEVKFGGGKVIRDGMGQGQMLAAEAMDLVLTNALIIDHWGIVKADIGIKHGRIAVIGKAGNPDVQPGVNVPVGPGTEVIAAEGKIVTAGGVDSHIHFICPQQVDEALNSGVTTFIGGGTGPATGTNATTCTPGPWYLARMLQAADSLPINIGLLGKGNASRPDALREQIAAGAVGLKLHEDWGSTPAAIDCCLGVAEEMDIQVAIHTDTLNESGCIEDTLAAIGDRTIHTFHTEGAGGGHAPDIIRAAGQANVLPSSTNPTLPYTINTVDEHLDMLMVCHHLDPSIAEDVAFAESRIRRETIAAEDILHDMGAFAMTSSDSQAMGRVGEVVLRTWQVAHQMKLRRGPLAPDTPYSDNFRVKRYIAKYTINPALTHGIGHEVGSVEVGKLADLVLWSPAFFAVKPALVLKGGMIVTAPMGDINGSIPTPQPVHYRPMFGALGAARHATRMTFLPQAAMDRGLAEELNLRSLIGVVNGCRRVRKPDMVHNTLQPLIEVDAQTYQVRADGELLVCEPASELPLAQRYFLF</sequence>
<evidence type="ECO:0000255" key="1">
    <source>
        <dbReference type="HAMAP-Rule" id="MF_01953"/>
    </source>
</evidence>
<feature type="chain" id="PRO_0000234170" description="Urease subunit alpha">
    <location>
        <begin position="1"/>
        <end position="567"/>
    </location>
</feature>
<feature type="domain" description="Urease" evidence="1">
    <location>
        <begin position="129"/>
        <end position="567"/>
    </location>
</feature>
<feature type="active site" description="Proton donor" evidence="1">
    <location>
        <position position="320"/>
    </location>
</feature>
<feature type="binding site" evidence="1">
    <location>
        <position position="134"/>
    </location>
    <ligand>
        <name>Ni(2+)</name>
        <dbReference type="ChEBI" id="CHEBI:49786"/>
        <label>1</label>
    </ligand>
</feature>
<feature type="binding site" evidence="1">
    <location>
        <position position="136"/>
    </location>
    <ligand>
        <name>Ni(2+)</name>
        <dbReference type="ChEBI" id="CHEBI:49786"/>
        <label>1</label>
    </ligand>
</feature>
<feature type="binding site" description="via carbamate group" evidence="1">
    <location>
        <position position="217"/>
    </location>
    <ligand>
        <name>Ni(2+)</name>
        <dbReference type="ChEBI" id="CHEBI:49786"/>
        <label>1</label>
    </ligand>
</feature>
<feature type="binding site" description="via carbamate group" evidence="1">
    <location>
        <position position="217"/>
    </location>
    <ligand>
        <name>Ni(2+)</name>
        <dbReference type="ChEBI" id="CHEBI:49786"/>
        <label>2</label>
    </ligand>
</feature>
<feature type="binding site" evidence="1">
    <location>
        <position position="219"/>
    </location>
    <ligand>
        <name>substrate</name>
    </ligand>
</feature>
<feature type="binding site" evidence="1">
    <location>
        <position position="246"/>
    </location>
    <ligand>
        <name>Ni(2+)</name>
        <dbReference type="ChEBI" id="CHEBI:49786"/>
        <label>2</label>
    </ligand>
</feature>
<feature type="binding site" evidence="1">
    <location>
        <position position="272"/>
    </location>
    <ligand>
        <name>Ni(2+)</name>
        <dbReference type="ChEBI" id="CHEBI:49786"/>
        <label>2</label>
    </ligand>
</feature>
<feature type="binding site" evidence="1">
    <location>
        <position position="360"/>
    </location>
    <ligand>
        <name>Ni(2+)</name>
        <dbReference type="ChEBI" id="CHEBI:49786"/>
        <label>1</label>
    </ligand>
</feature>
<feature type="modified residue" description="N6-carboxylysine" evidence="1">
    <location>
        <position position="217"/>
    </location>
</feature>
<comment type="catalytic activity">
    <reaction evidence="1">
        <text>urea + 2 H2O + H(+) = hydrogencarbonate + 2 NH4(+)</text>
        <dbReference type="Rhea" id="RHEA:20557"/>
        <dbReference type="ChEBI" id="CHEBI:15377"/>
        <dbReference type="ChEBI" id="CHEBI:15378"/>
        <dbReference type="ChEBI" id="CHEBI:16199"/>
        <dbReference type="ChEBI" id="CHEBI:17544"/>
        <dbReference type="ChEBI" id="CHEBI:28938"/>
        <dbReference type="EC" id="3.5.1.5"/>
    </reaction>
</comment>
<comment type="cofactor">
    <cofactor evidence="1">
        <name>Ni cation</name>
        <dbReference type="ChEBI" id="CHEBI:25516"/>
    </cofactor>
    <text evidence="1">Binds 2 nickel ions per subunit.</text>
</comment>
<comment type="pathway">
    <text evidence="1">Nitrogen metabolism; urea degradation; CO(2) and NH(3) from urea (urease route): step 1/1.</text>
</comment>
<comment type="subunit">
    <text evidence="1">Heterotrimer of UreA (gamma), UreB (beta) and UreC (alpha) subunits. Three heterotrimers associate to form the active enzyme.</text>
</comment>
<comment type="subcellular location">
    <subcellularLocation>
        <location evidence="1">Cytoplasm</location>
    </subcellularLocation>
</comment>
<comment type="PTM">
    <text evidence="1">Carboxylation allows a single lysine to coordinate two nickel ions.</text>
</comment>
<comment type="similarity">
    <text evidence="1">Belongs to the metallo-dependent hydrolases superfamily. Urease alpha subunit family.</text>
</comment>
<reference key="1">
    <citation type="journal article" date="2002" name="Environ. Microbiol.">
        <title>Complete genome sequence and comparative analysis of the metabolically versatile Pseudomonas putida KT2440.</title>
        <authorList>
            <person name="Nelson K.E."/>
            <person name="Weinel C."/>
            <person name="Paulsen I.T."/>
            <person name="Dodson R.J."/>
            <person name="Hilbert H."/>
            <person name="Martins dos Santos V.A.P."/>
            <person name="Fouts D.E."/>
            <person name="Gill S.R."/>
            <person name="Pop M."/>
            <person name="Holmes M."/>
            <person name="Brinkac L.M."/>
            <person name="Beanan M.J."/>
            <person name="DeBoy R.T."/>
            <person name="Daugherty S.C."/>
            <person name="Kolonay J.F."/>
            <person name="Madupu R."/>
            <person name="Nelson W.C."/>
            <person name="White O."/>
            <person name="Peterson J.D."/>
            <person name="Khouri H.M."/>
            <person name="Hance I."/>
            <person name="Chris Lee P."/>
            <person name="Holtzapple E.K."/>
            <person name="Scanlan D."/>
            <person name="Tran K."/>
            <person name="Moazzez A."/>
            <person name="Utterback T.R."/>
            <person name="Rizzo M."/>
            <person name="Lee K."/>
            <person name="Kosack D."/>
            <person name="Moestl D."/>
            <person name="Wedler H."/>
            <person name="Lauber J."/>
            <person name="Stjepandic D."/>
            <person name="Hoheisel J."/>
            <person name="Straetz M."/>
            <person name="Heim S."/>
            <person name="Kiewitz C."/>
            <person name="Eisen J.A."/>
            <person name="Timmis K.N."/>
            <person name="Duesterhoeft A."/>
            <person name="Tuemmler B."/>
            <person name="Fraser C.M."/>
        </authorList>
    </citation>
    <scope>NUCLEOTIDE SEQUENCE [LARGE SCALE GENOMIC DNA]</scope>
    <source>
        <strain>ATCC 47054 / DSM 6125 / CFBP 8728 / NCIMB 11950 / KT2440</strain>
    </source>
</reference>